<protein>
    <recommendedName>
        <fullName evidence="1">Triosephosphate isomerase</fullName>
        <shortName evidence="1">TIM</shortName>
        <shortName evidence="1">TPI</shortName>
        <ecNumber evidence="1">5.3.1.1</ecNumber>
    </recommendedName>
    <alternativeName>
        <fullName evidence="1">Triose-phosphate isomerase</fullName>
    </alternativeName>
</protein>
<proteinExistence type="inferred from homology"/>
<comment type="function">
    <text evidence="1">Involved in the gluconeogenesis. Catalyzes stereospecifically the conversion of dihydroxyacetone phosphate (DHAP) to D-glyceraldehyde-3-phosphate (G3P).</text>
</comment>
<comment type="catalytic activity">
    <reaction evidence="1">
        <text>D-glyceraldehyde 3-phosphate = dihydroxyacetone phosphate</text>
        <dbReference type="Rhea" id="RHEA:18585"/>
        <dbReference type="ChEBI" id="CHEBI:57642"/>
        <dbReference type="ChEBI" id="CHEBI:59776"/>
        <dbReference type="EC" id="5.3.1.1"/>
    </reaction>
</comment>
<comment type="pathway">
    <text evidence="1">Carbohydrate biosynthesis; gluconeogenesis.</text>
</comment>
<comment type="pathway">
    <text evidence="1">Carbohydrate degradation; glycolysis; D-glyceraldehyde 3-phosphate from glycerone phosphate: step 1/1.</text>
</comment>
<comment type="subunit">
    <text evidence="1">Homodimer.</text>
</comment>
<comment type="subcellular location">
    <subcellularLocation>
        <location evidence="1">Cytoplasm</location>
    </subcellularLocation>
</comment>
<comment type="similarity">
    <text evidence="1">Belongs to the triosephosphate isomerase family.</text>
</comment>
<reference key="1">
    <citation type="journal article" date="2001" name="Nature">
        <title>Genome sequence of Yersinia pestis, the causative agent of plague.</title>
        <authorList>
            <person name="Parkhill J."/>
            <person name="Wren B.W."/>
            <person name="Thomson N.R."/>
            <person name="Titball R.W."/>
            <person name="Holden M.T.G."/>
            <person name="Prentice M.B."/>
            <person name="Sebaihia M."/>
            <person name="James K.D."/>
            <person name="Churcher C.M."/>
            <person name="Mungall K.L."/>
            <person name="Baker S."/>
            <person name="Basham D."/>
            <person name="Bentley S.D."/>
            <person name="Brooks K."/>
            <person name="Cerdeno-Tarraga A.-M."/>
            <person name="Chillingworth T."/>
            <person name="Cronin A."/>
            <person name="Davies R.M."/>
            <person name="Davis P."/>
            <person name="Dougan G."/>
            <person name="Feltwell T."/>
            <person name="Hamlin N."/>
            <person name="Holroyd S."/>
            <person name="Jagels K."/>
            <person name="Karlyshev A.V."/>
            <person name="Leather S."/>
            <person name="Moule S."/>
            <person name="Oyston P.C.F."/>
            <person name="Quail M.A."/>
            <person name="Rutherford K.M."/>
            <person name="Simmonds M."/>
            <person name="Skelton J."/>
            <person name="Stevens K."/>
            <person name="Whitehead S."/>
            <person name="Barrell B.G."/>
        </authorList>
    </citation>
    <scope>NUCLEOTIDE SEQUENCE [LARGE SCALE GENOMIC DNA]</scope>
    <source>
        <strain>CO-92 / Biovar Orientalis</strain>
    </source>
</reference>
<reference key="2">
    <citation type="journal article" date="2002" name="J. Bacteriol.">
        <title>Genome sequence of Yersinia pestis KIM.</title>
        <authorList>
            <person name="Deng W."/>
            <person name="Burland V."/>
            <person name="Plunkett G. III"/>
            <person name="Boutin A."/>
            <person name="Mayhew G.F."/>
            <person name="Liss P."/>
            <person name="Perna N.T."/>
            <person name="Rose D.J."/>
            <person name="Mau B."/>
            <person name="Zhou S."/>
            <person name="Schwartz D.C."/>
            <person name="Fetherston J.D."/>
            <person name="Lindler L.E."/>
            <person name="Brubaker R.R."/>
            <person name="Plano G.V."/>
            <person name="Straley S.C."/>
            <person name="McDonough K.A."/>
            <person name="Nilles M.L."/>
            <person name="Matson J.S."/>
            <person name="Blattner F.R."/>
            <person name="Perry R.D."/>
        </authorList>
    </citation>
    <scope>NUCLEOTIDE SEQUENCE [LARGE SCALE GENOMIC DNA]</scope>
    <source>
        <strain>KIM10+ / Biovar Mediaevalis</strain>
    </source>
</reference>
<reference key="3">
    <citation type="journal article" date="2004" name="DNA Res.">
        <title>Complete genome sequence of Yersinia pestis strain 91001, an isolate avirulent to humans.</title>
        <authorList>
            <person name="Song Y."/>
            <person name="Tong Z."/>
            <person name="Wang J."/>
            <person name="Wang L."/>
            <person name="Guo Z."/>
            <person name="Han Y."/>
            <person name="Zhang J."/>
            <person name="Pei D."/>
            <person name="Zhou D."/>
            <person name="Qin H."/>
            <person name="Pang X."/>
            <person name="Han Y."/>
            <person name="Zhai J."/>
            <person name="Li M."/>
            <person name="Cui B."/>
            <person name="Qi Z."/>
            <person name="Jin L."/>
            <person name="Dai R."/>
            <person name="Chen F."/>
            <person name="Li S."/>
            <person name="Ye C."/>
            <person name="Du Z."/>
            <person name="Lin W."/>
            <person name="Wang J."/>
            <person name="Yu J."/>
            <person name="Yang H."/>
            <person name="Wang J."/>
            <person name="Huang P."/>
            <person name="Yang R."/>
        </authorList>
    </citation>
    <scope>NUCLEOTIDE SEQUENCE [LARGE SCALE GENOMIC DNA]</scope>
    <source>
        <strain>91001 / Biovar Mediaevalis</strain>
    </source>
</reference>
<accession>Q8ZJK9</accession>
<accession>Q0WKK9</accession>
<feature type="chain" id="PRO_0000090326" description="Triosephosphate isomerase">
    <location>
        <begin position="1"/>
        <end position="255"/>
    </location>
</feature>
<feature type="active site" description="Electrophile" evidence="1">
    <location>
        <position position="95"/>
    </location>
</feature>
<feature type="active site" description="Proton acceptor" evidence="1">
    <location>
        <position position="167"/>
    </location>
</feature>
<feature type="binding site" evidence="1">
    <location>
        <begin position="9"/>
        <end position="11"/>
    </location>
    <ligand>
        <name>substrate</name>
    </ligand>
</feature>
<feature type="binding site" evidence="1">
    <location>
        <position position="173"/>
    </location>
    <ligand>
        <name>substrate</name>
    </ligand>
</feature>
<feature type="binding site" evidence="1">
    <location>
        <position position="212"/>
    </location>
    <ligand>
        <name>substrate</name>
    </ligand>
</feature>
<feature type="binding site" evidence="1">
    <location>
        <begin position="233"/>
        <end position="234"/>
    </location>
    <ligand>
        <name>substrate</name>
    </ligand>
</feature>
<organism>
    <name type="scientific">Yersinia pestis</name>
    <dbReference type="NCBI Taxonomy" id="632"/>
    <lineage>
        <taxon>Bacteria</taxon>
        <taxon>Pseudomonadati</taxon>
        <taxon>Pseudomonadota</taxon>
        <taxon>Gammaproteobacteria</taxon>
        <taxon>Enterobacterales</taxon>
        <taxon>Yersiniaceae</taxon>
        <taxon>Yersinia</taxon>
    </lineage>
</organism>
<keyword id="KW-0963">Cytoplasm</keyword>
<keyword id="KW-0312">Gluconeogenesis</keyword>
<keyword id="KW-0324">Glycolysis</keyword>
<keyword id="KW-0413">Isomerase</keyword>
<keyword id="KW-1185">Reference proteome</keyword>
<sequence>MRHPLVMGNWKLNGSTHMVNELIAGLRKELSTVDGCGVAIAPPAIYLNQAKHELAGSRIALGAQNVDVNLSGAFTGETSAEMLKDIGAQYIIIGHSERRTYHQESDELIAKKFGVLKEIGLIPVLCIGESEAENEAGQTEAVCAKQLDAVLNTLGVKAFEGAVIAYEPIWAIGTGKSATPAQAQAVHKFIRDHIAKQDAAVAAQVIIQYGGSVNDKNAAELFTQPDIDGALVGGASLKADAFAVIVKAAAKAKKA</sequence>
<dbReference type="EC" id="5.3.1.1" evidence="1"/>
<dbReference type="EMBL" id="AL590842">
    <property type="protein sequence ID" value="CAL18774.1"/>
    <property type="molecule type" value="Genomic_DNA"/>
</dbReference>
<dbReference type="EMBL" id="AE009952">
    <property type="protein sequence ID" value="AAM83647.1"/>
    <property type="molecule type" value="Genomic_DNA"/>
</dbReference>
<dbReference type="EMBL" id="AE017042">
    <property type="protein sequence ID" value="AAS60368.1"/>
    <property type="molecule type" value="Genomic_DNA"/>
</dbReference>
<dbReference type="PIR" id="AE0011">
    <property type="entry name" value="AE0011"/>
</dbReference>
<dbReference type="RefSeq" id="WP_002208959.1">
    <property type="nucleotide sequence ID" value="NZ_WUCM01000015.1"/>
</dbReference>
<dbReference type="RefSeq" id="YP_002345179.1">
    <property type="nucleotide sequence ID" value="NC_003143.1"/>
</dbReference>
<dbReference type="SMR" id="Q8ZJK9"/>
<dbReference type="STRING" id="214092.YPO0085"/>
<dbReference type="PaxDb" id="214092-YPO0085"/>
<dbReference type="DNASU" id="1144999"/>
<dbReference type="EnsemblBacteria" id="AAS60368">
    <property type="protein sequence ID" value="AAS60368"/>
    <property type="gene ID" value="YP_0089"/>
</dbReference>
<dbReference type="GeneID" id="57974507"/>
<dbReference type="KEGG" id="ype:YPO0085"/>
<dbReference type="KEGG" id="ypk:y0052"/>
<dbReference type="KEGG" id="ypm:YP_0089"/>
<dbReference type="PATRIC" id="fig|214092.21.peg.311"/>
<dbReference type="eggNOG" id="COG0149">
    <property type="taxonomic scope" value="Bacteria"/>
</dbReference>
<dbReference type="HOGENOM" id="CLU_024251_2_1_6"/>
<dbReference type="OMA" id="NWKMHMT"/>
<dbReference type="OrthoDB" id="9809429at2"/>
<dbReference type="UniPathway" id="UPA00109">
    <property type="reaction ID" value="UER00189"/>
</dbReference>
<dbReference type="UniPathway" id="UPA00138"/>
<dbReference type="Proteomes" id="UP000000815">
    <property type="component" value="Chromosome"/>
</dbReference>
<dbReference type="Proteomes" id="UP000001019">
    <property type="component" value="Chromosome"/>
</dbReference>
<dbReference type="Proteomes" id="UP000002490">
    <property type="component" value="Chromosome"/>
</dbReference>
<dbReference type="GO" id="GO:0005829">
    <property type="term" value="C:cytosol"/>
    <property type="evidence" value="ECO:0000318"/>
    <property type="project" value="GO_Central"/>
</dbReference>
<dbReference type="GO" id="GO:0004807">
    <property type="term" value="F:triose-phosphate isomerase activity"/>
    <property type="evidence" value="ECO:0000318"/>
    <property type="project" value="GO_Central"/>
</dbReference>
<dbReference type="GO" id="GO:0006094">
    <property type="term" value="P:gluconeogenesis"/>
    <property type="evidence" value="ECO:0000318"/>
    <property type="project" value="GO_Central"/>
</dbReference>
<dbReference type="GO" id="GO:0046166">
    <property type="term" value="P:glyceraldehyde-3-phosphate biosynthetic process"/>
    <property type="evidence" value="ECO:0000318"/>
    <property type="project" value="GO_Central"/>
</dbReference>
<dbReference type="GO" id="GO:0019563">
    <property type="term" value="P:glycerol catabolic process"/>
    <property type="evidence" value="ECO:0000318"/>
    <property type="project" value="GO_Central"/>
</dbReference>
<dbReference type="GO" id="GO:0006096">
    <property type="term" value="P:glycolytic process"/>
    <property type="evidence" value="ECO:0000318"/>
    <property type="project" value="GO_Central"/>
</dbReference>
<dbReference type="CDD" id="cd00311">
    <property type="entry name" value="TIM"/>
    <property type="match status" value="1"/>
</dbReference>
<dbReference type="FunFam" id="3.20.20.70:FF:000020">
    <property type="entry name" value="Triosephosphate isomerase"/>
    <property type="match status" value="1"/>
</dbReference>
<dbReference type="Gene3D" id="3.20.20.70">
    <property type="entry name" value="Aldolase class I"/>
    <property type="match status" value="1"/>
</dbReference>
<dbReference type="HAMAP" id="MF_00147_B">
    <property type="entry name" value="TIM_B"/>
    <property type="match status" value="1"/>
</dbReference>
<dbReference type="InterPro" id="IPR013785">
    <property type="entry name" value="Aldolase_TIM"/>
</dbReference>
<dbReference type="InterPro" id="IPR035990">
    <property type="entry name" value="TIM_sf"/>
</dbReference>
<dbReference type="InterPro" id="IPR022896">
    <property type="entry name" value="TrioseP_Isoase_bac/euk"/>
</dbReference>
<dbReference type="InterPro" id="IPR000652">
    <property type="entry name" value="Triosephosphate_isomerase"/>
</dbReference>
<dbReference type="InterPro" id="IPR020861">
    <property type="entry name" value="Triosephosphate_isomerase_AS"/>
</dbReference>
<dbReference type="NCBIfam" id="TIGR00419">
    <property type="entry name" value="tim"/>
    <property type="match status" value="1"/>
</dbReference>
<dbReference type="PANTHER" id="PTHR21139">
    <property type="entry name" value="TRIOSEPHOSPHATE ISOMERASE"/>
    <property type="match status" value="1"/>
</dbReference>
<dbReference type="PANTHER" id="PTHR21139:SF42">
    <property type="entry name" value="TRIOSEPHOSPHATE ISOMERASE"/>
    <property type="match status" value="1"/>
</dbReference>
<dbReference type="Pfam" id="PF00121">
    <property type="entry name" value="TIM"/>
    <property type="match status" value="1"/>
</dbReference>
<dbReference type="SUPFAM" id="SSF51351">
    <property type="entry name" value="Triosephosphate isomerase (TIM)"/>
    <property type="match status" value="1"/>
</dbReference>
<dbReference type="PROSITE" id="PS00171">
    <property type="entry name" value="TIM_1"/>
    <property type="match status" value="1"/>
</dbReference>
<dbReference type="PROSITE" id="PS51440">
    <property type="entry name" value="TIM_2"/>
    <property type="match status" value="1"/>
</dbReference>
<gene>
    <name evidence="1" type="primary">tpiA</name>
    <name type="ordered locus">YPO0085</name>
    <name type="ordered locus">y0052</name>
    <name type="ordered locus">YP_0089</name>
</gene>
<evidence type="ECO:0000255" key="1">
    <source>
        <dbReference type="HAMAP-Rule" id="MF_00147"/>
    </source>
</evidence>
<name>TPIS_YERPE</name>